<proteinExistence type="inferred from homology"/>
<dbReference type="EMBL" id="CP000260">
    <property type="protein sequence ID" value="ABF33296.1"/>
    <property type="molecule type" value="Genomic_DNA"/>
</dbReference>
<dbReference type="RefSeq" id="WP_002986047.1">
    <property type="nucleotide sequence ID" value="NZ_CVUH01000002.1"/>
</dbReference>
<dbReference type="SMR" id="Q1JIM7"/>
<dbReference type="GeneID" id="69900198"/>
<dbReference type="KEGG" id="sph:MGAS10270_Spy0231"/>
<dbReference type="HOGENOM" id="CLU_072226_1_1_9"/>
<dbReference type="Proteomes" id="UP000002436">
    <property type="component" value="Chromosome"/>
</dbReference>
<dbReference type="GO" id="GO:0015935">
    <property type="term" value="C:small ribosomal subunit"/>
    <property type="evidence" value="ECO:0007669"/>
    <property type="project" value="InterPro"/>
</dbReference>
<dbReference type="GO" id="GO:0019843">
    <property type="term" value="F:rRNA binding"/>
    <property type="evidence" value="ECO:0007669"/>
    <property type="project" value="UniProtKB-UniRule"/>
</dbReference>
<dbReference type="GO" id="GO:0003735">
    <property type="term" value="F:structural constituent of ribosome"/>
    <property type="evidence" value="ECO:0007669"/>
    <property type="project" value="InterPro"/>
</dbReference>
<dbReference type="GO" id="GO:0000049">
    <property type="term" value="F:tRNA binding"/>
    <property type="evidence" value="ECO:0007669"/>
    <property type="project" value="UniProtKB-UniRule"/>
</dbReference>
<dbReference type="GO" id="GO:0006412">
    <property type="term" value="P:translation"/>
    <property type="evidence" value="ECO:0007669"/>
    <property type="project" value="UniProtKB-UniRule"/>
</dbReference>
<dbReference type="CDD" id="cd14869">
    <property type="entry name" value="uS7_Bacteria"/>
    <property type="match status" value="1"/>
</dbReference>
<dbReference type="FunFam" id="1.10.455.10:FF:000001">
    <property type="entry name" value="30S ribosomal protein S7"/>
    <property type="match status" value="1"/>
</dbReference>
<dbReference type="Gene3D" id="1.10.455.10">
    <property type="entry name" value="Ribosomal protein S7 domain"/>
    <property type="match status" value="1"/>
</dbReference>
<dbReference type="HAMAP" id="MF_00480_B">
    <property type="entry name" value="Ribosomal_uS7_B"/>
    <property type="match status" value="1"/>
</dbReference>
<dbReference type="InterPro" id="IPR000235">
    <property type="entry name" value="Ribosomal_uS7"/>
</dbReference>
<dbReference type="InterPro" id="IPR005717">
    <property type="entry name" value="Ribosomal_uS7_bac/org-type"/>
</dbReference>
<dbReference type="InterPro" id="IPR020606">
    <property type="entry name" value="Ribosomal_uS7_CS"/>
</dbReference>
<dbReference type="InterPro" id="IPR023798">
    <property type="entry name" value="Ribosomal_uS7_dom"/>
</dbReference>
<dbReference type="InterPro" id="IPR036823">
    <property type="entry name" value="Ribosomal_uS7_dom_sf"/>
</dbReference>
<dbReference type="NCBIfam" id="TIGR01029">
    <property type="entry name" value="rpsG_bact"/>
    <property type="match status" value="1"/>
</dbReference>
<dbReference type="PANTHER" id="PTHR11205">
    <property type="entry name" value="RIBOSOMAL PROTEIN S7"/>
    <property type="match status" value="1"/>
</dbReference>
<dbReference type="Pfam" id="PF00177">
    <property type="entry name" value="Ribosomal_S7"/>
    <property type="match status" value="1"/>
</dbReference>
<dbReference type="PIRSF" id="PIRSF002122">
    <property type="entry name" value="RPS7p_RPS7a_RPS5e_RPS7o"/>
    <property type="match status" value="1"/>
</dbReference>
<dbReference type="SUPFAM" id="SSF47973">
    <property type="entry name" value="Ribosomal protein S7"/>
    <property type="match status" value="1"/>
</dbReference>
<dbReference type="PROSITE" id="PS00052">
    <property type="entry name" value="RIBOSOMAL_S7"/>
    <property type="match status" value="1"/>
</dbReference>
<keyword id="KW-0687">Ribonucleoprotein</keyword>
<keyword id="KW-0689">Ribosomal protein</keyword>
<keyword id="KW-0694">RNA-binding</keyword>
<keyword id="KW-0699">rRNA-binding</keyword>
<keyword id="KW-0820">tRNA-binding</keyword>
<accession>Q1JIM7</accession>
<feature type="chain" id="PRO_1000014301" description="Small ribosomal subunit protein uS7">
    <location>
        <begin position="1"/>
        <end position="156"/>
    </location>
</feature>
<comment type="function">
    <text evidence="1">One of the primary rRNA binding proteins, it binds directly to 16S rRNA where it nucleates assembly of the head domain of the 30S subunit. Is located at the subunit interface close to the decoding center, probably blocks exit of the E-site tRNA.</text>
</comment>
<comment type="subunit">
    <text evidence="1">Part of the 30S ribosomal subunit. Contacts proteins S9 and S11.</text>
</comment>
<comment type="similarity">
    <text evidence="1">Belongs to the universal ribosomal protein uS7 family.</text>
</comment>
<sequence length="156" mass="17652">MSRKNQAPKREVLPDPLYNSKIVTRLINRVMLDGKRGTAATIVYDAFSAIKEATGNDALEVFETAMDNIMPVLEVRARRVGGSNYQVPVEVRPERRTTLGLRWLVNASRARGEHTMKDRLAKEIMDAANNTGASVKKREDTHKMAEANRAFAHFRW</sequence>
<reference key="1">
    <citation type="journal article" date="2006" name="Proc. Natl. Acad. Sci. U.S.A.">
        <title>Molecular genetic anatomy of inter- and intraserotype variation in the human bacterial pathogen group A Streptococcus.</title>
        <authorList>
            <person name="Beres S.B."/>
            <person name="Richter E.W."/>
            <person name="Nagiec M.J."/>
            <person name="Sumby P."/>
            <person name="Porcella S.F."/>
            <person name="DeLeo F.R."/>
            <person name="Musser J.M."/>
        </authorList>
    </citation>
    <scope>NUCLEOTIDE SEQUENCE [LARGE SCALE GENOMIC DNA]</scope>
    <source>
        <strain>MGAS10270</strain>
    </source>
</reference>
<protein>
    <recommendedName>
        <fullName evidence="1">Small ribosomal subunit protein uS7</fullName>
    </recommendedName>
    <alternativeName>
        <fullName evidence="2">30S ribosomal protein S7</fullName>
    </alternativeName>
</protein>
<name>RS7_STRPD</name>
<gene>
    <name evidence="1" type="primary">rpsG</name>
    <name type="ordered locus">MGAS10270_Spy0231</name>
</gene>
<organism>
    <name type="scientific">Streptococcus pyogenes serotype M2 (strain MGAS10270)</name>
    <dbReference type="NCBI Taxonomy" id="370552"/>
    <lineage>
        <taxon>Bacteria</taxon>
        <taxon>Bacillati</taxon>
        <taxon>Bacillota</taxon>
        <taxon>Bacilli</taxon>
        <taxon>Lactobacillales</taxon>
        <taxon>Streptococcaceae</taxon>
        <taxon>Streptococcus</taxon>
    </lineage>
</organism>
<evidence type="ECO:0000255" key="1">
    <source>
        <dbReference type="HAMAP-Rule" id="MF_00480"/>
    </source>
</evidence>
<evidence type="ECO:0000305" key="2"/>